<reference key="1">
    <citation type="journal article" date="2005" name="Science">
        <title>The transcriptional landscape of the mammalian genome.</title>
        <authorList>
            <person name="Carninci P."/>
            <person name="Kasukawa T."/>
            <person name="Katayama S."/>
            <person name="Gough J."/>
            <person name="Frith M.C."/>
            <person name="Maeda N."/>
            <person name="Oyama R."/>
            <person name="Ravasi T."/>
            <person name="Lenhard B."/>
            <person name="Wells C."/>
            <person name="Kodzius R."/>
            <person name="Shimokawa K."/>
            <person name="Bajic V.B."/>
            <person name="Brenner S.E."/>
            <person name="Batalov S."/>
            <person name="Forrest A.R."/>
            <person name="Zavolan M."/>
            <person name="Davis M.J."/>
            <person name="Wilming L.G."/>
            <person name="Aidinis V."/>
            <person name="Allen J.E."/>
            <person name="Ambesi-Impiombato A."/>
            <person name="Apweiler R."/>
            <person name="Aturaliya R.N."/>
            <person name="Bailey T.L."/>
            <person name="Bansal M."/>
            <person name="Baxter L."/>
            <person name="Beisel K.W."/>
            <person name="Bersano T."/>
            <person name="Bono H."/>
            <person name="Chalk A.M."/>
            <person name="Chiu K.P."/>
            <person name="Choudhary V."/>
            <person name="Christoffels A."/>
            <person name="Clutterbuck D.R."/>
            <person name="Crowe M.L."/>
            <person name="Dalla E."/>
            <person name="Dalrymple B.P."/>
            <person name="de Bono B."/>
            <person name="Della Gatta G."/>
            <person name="di Bernardo D."/>
            <person name="Down T."/>
            <person name="Engstrom P."/>
            <person name="Fagiolini M."/>
            <person name="Faulkner G."/>
            <person name="Fletcher C.F."/>
            <person name="Fukushima T."/>
            <person name="Furuno M."/>
            <person name="Futaki S."/>
            <person name="Gariboldi M."/>
            <person name="Georgii-Hemming P."/>
            <person name="Gingeras T.R."/>
            <person name="Gojobori T."/>
            <person name="Green R.E."/>
            <person name="Gustincich S."/>
            <person name="Harbers M."/>
            <person name="Hayashi Y."/>
            <person name="Hensch T.K."/>
            <person name="Hirokawa N."/>
            <person name="Hill D."/>
            <person name="Huminiecki L."/>
            <person name="Iacono M."/>
            <person name="Ikeo K."/>
            <person name="Iwama A."/>
            <person name="Ishikawa T."/>
            <person name="Jakt M."/>
            <person name="Kanapin A."/>
            <person name="Katoh M."/>
            <person name="Kawasawa Y."/>
            <person name="Kelso J."/>
            <person name="Kitamura H."/>
            <person name="Kitano H."/>
            <person name="Kollias G."/>
            <person name="Krishnan S.P."/>
            <person name="Kruger A."/>
            <person name="Kummerfeld S.K."/>
            <person name="Kurochkin I.V."/>
            <person name="Lareau L.F."/>
            <person name="Lazarevic D."/>
            <person name="Lipovich L."/>
            <person name="Liu J."/>
            <person name="Liuni S."/>
            <person name="McWilliam S."/>
            <person name="Madan Babu M."/>
            <person name="Madera M."/>
            <person name="Marchionni L."/>
            <person name="Matsuda H."/>
            <person name="Matsuzawa S."/>
            <person name="Miki H."/>
            <person name="Mignone F."/>
            <person name="Miyake S."/>
            <person name="Morris K."/>
            <person name="Mottagui-Tabar S."/>
            <person name="Mulder N."/>
            <person name="Nakano N."/>
            <person name="Nakauchi H."/>
            <person name="Ng P."/>
            <person name="Nilsson R."/>
            <person name="Nishiguchi S."/>
            <person name="Nishikawa S."/>
            <person name="Nori F."/>
            <person name="Ohara O."/>
            <person name="Okazaki Y."/>
            <person name="Orlando V."/>
            <person name="Pang K.C."/>
            <person name="Pavan W.J."/>
            <person name="Pavesi G."/>
            <person name="Pesole G."/>
            <person name="Petrovsky N."/>
            <person name="Piazza S."/>
            <person name="Reed J."/>
            <person name="Reid J.F."/>
            <person name="Ring B.Z."/>
            <person name="Ringwald M."/>
            <person name="Rost B."/>
            <person name="Ruan Y."/>
            <person name="Salzberg S.L."/>
            <person name="Sandelin A."/>
            <person name="Schneider C."/>
            <person name="Schoenbach C."/>
            <person name="Sekiguchi K."/>
            <person name="Semple C.A."/>
            <person name="Seno S."/>
            <person name="Sessa L."/>
            <person name="Sheng Y."/>
            <person name="Shibata Y."/>
            <person name="Shimada H."/>
            <person name="Shimada K."/>
            <person name="Silva D."/>
            <person name="Sinclair B."/>
            <person name="Sperling S."/>
            <person name="Stupka E."/>
            <person name="Sugiura K."/>
            <person name="Sultana R."/>
            <person name="Takenaka Y."/>
            <person name="Taki K."/>
            <person name="Tammoja K."/>
            <person name="Tan S.L."/>
            <person name="Tang S."/>
            <person name="Taylor M.S."/>
            <person name="Tegner J."/>
            <person name="Teichmann S.A."/>
            <person name="Ueda H.R."/>
            <person name="van Nimwegen E."/>
            <person name="Verardo R."/>
            <person name="Wei C.L."/>
            <person name="Yagi K."/>
            <person name="Yamanishi H."/>
            <person name="Zabarovsky E."/>
            <person name="Zhu S."/>
            <person name="Zimmer A."/>
            <person name="Hide W."/>
            <person name="Bult C."/>
            <person name="Grimmond S.M."/>
            <person name="Teasdale R.D."/>
            <person name="Liu E.T."/>
            <person name="Brusic V."/>
            <person name="Quackenbush J."/>
            <person name="Wahlestedt C."/>
            <person name="Mattick J.S."/>
            <person name="Hume D.A."/>
            <person name="Kai C."/>
            <person name="Sasaki D."/>
            <person name="Tomaru Y."/>
            <person name="Fukuda S."/>
            <person name="Kanamori-Katayama M."/>
            <person name="Suzuki M."/>
            <person name="Aoki J."/>
            <person name="Arakawa T."/>
            <person name="Iida J."/>
            <person name="Imamura K."/>
            <person name="Itoh M."/>
            <person name="Kato T."/>
            <person name="Kawaji H."/>
            <person name="Kawagashira N."/>
            <person name="Kawashima T."/>
            <person name="Kojima M."/>
            <person name="Kondo S."/>
            <person name="Konno H."/>
            <person name="Nakano K."/>
            <person name="Ninomiya N."/>
            <person name="Nishio T."/>
            <person name="Okada M."/>
            <person name="Plessy C."/>
            <person name="Shibata K."/>
            <person name="Shiraki T."/>
            <person name="Suzuki S."/>
            <person name="Tagami M."/>
            <person name="Waki K."/>
            <person name="Watahiki A."/>
            <person name="Okamura-Oho Y."/>
            <person name="Suzuki H."/>
            <person name="Kawai J."/>
            <person name="Hayashizaki Y."/>
        </authorList>
    </citation>
    <scope>NUCLEOTIDE SEQUENCE [LARGE SCALE MRNA]</scope>
    <source>
        <strain>C57BL/6J</strain>
        <strain>NOD</strain>
        <tissue>Mammary gland</tissue>
        <tissue>Placenta</tissue>
        <tissue>Spleen</tissue>
    </source>
</reference>
<reference key="2">
    <citation type="journal article" date="2004" name="Genome Res.">
        <title>The status, quality, and expansion of the NIH full-length cDNA project: the Mammalian Gene Collection (MGC).</title>
        <authorList>
            <consortium name="The MGC Project Team"/>
        </authorList>
    </citation>
    <scope>NUCLEOTIDE SEQUENCE [LARGE SCALE MRNA]</scope>
    <source>
        <strain>C57BL/6J</strain>
        <tissue>Brain</tissue>
    </source>
</reference>
<reference key="3">
    <citation type="journal article" date="2010" name="Cell">
        <title>A tissue-specific atlas of mouse protein phosphorylation and expression.</title>
        <authorList>
            <person name="Huttlin E.L."/>
            <person name="Jedrychowski M.P."/>
            <person name="Elias J.E."/>
            <person name="Goswami T."/>
            <person name="Rad R."/>
            <person name="Beausoleil S.A."/>
            <person name="Villen J."/>
            <person name="Haas W."/>
            <person name="Sowa M.E."/>
            <person name="Gygi S.P."/>
        </authorList>
    </citation>
    <scope>IDENTIFICATION BY MASS SPECTROMETRY [LARGE SCALE ANALYSIS]</scope>
    <source>
        <tissue>Liver</tissue>
        <tissue>Lung</tissue>
        <tissue>Testis</tissue>
    </source>
</reference>
<gene>
    <name evidence="4" type="primary">Selenoh</name>
</gene>
<organism>
    <name type="scientific">Mus musculus</name>
    <name type="common">Mouse</name>
    <dbReference type="NCBI Taxonomy" id="10090"/>
    <lineage>
        <taxon>Eukaryota</taxon>
        <taxon>Metazoa</taxon>
        <taxon>Chordata</taxon>
        <taxon>Craniata</taxon>
        <taxon>Vertebrata</taxon>
        <taxon>Euteleostomi</taxon>
        <taxon>Mammalia</taxon>
        <taxon>Eutheria</taxon>
        <taxon>Euarchontoglires</taxon>
        <taxon>Glires</taxon>
        <taxon>Rodentia</taxon>
        <taxon>Myomorpha</taxon>
        <taxon>Muroidea</taxon>
        <taxon>Muridae</taxon>
        <taxon>Murinae</taxon>
        <taxon>Mus</taxon>
        <taxon>Mus</taxon>
    </lineage>
</organism>
<name>SELH_MOUSE</name>
<feature type="chain" id="PRO_0000318631" description="Selenoprotein H">
    <location>
        <begin position="1"/>
        <end position="116"/>
    </location>
</feature>
<feature type="non-standard amino acid" description="Selenocysteine">
    <location>
        <position position="38"/>
    </location>
</feature>
<feature type="modified residue" description="N6-acetyllysine" evidence="2">
    <location>
        <position position="20"/>
    </location>
</feature>
<feature type="cross-link" description="Cysteinyl-selenocysteine (Cys-Sec); redox-active" evidence="1">
    <location>
        <begin position="35"/>
        <end position="38"/>
    </location>
</feature>
<accession>Q3UQA7</accession>
<accession>Q7TNQ0</accession>
<sequence length="116" mass="12974">MAPHGRKRKAGAAPMETVDKREKLAEGATVVIEHCTSURVYGRHAAALSQALQLEAPELPVQVNPSKPRRGSFEVTLLRSDNSRVELWTGIKKGPPRKLKFPEPQEVVEELKKYLS</sequence>
<evidence type="ECO:0000250" key="1"/>
<evidence type="ECO:0000250" key="2">
    <source>
        <dbReference type="UniProtKB" id="Q8IZQ5"/>
    </source>
</evidence>
<evidence type="ECO:0000305" key="3"/>
<evidence type="ECO:0000312" key="4">
    <source>
        <dbReference type="MGI" id="MGI:1919907"/>
    </source>
</evidence>
<keyword id="KW-0007">Acetylation</keyword>
<keyword id="KW-0676">Redox-active center</keyword>
<keyword id="KW-1185">Reference proteome</keyword>
<keyword id="KW-0712">Selenocysteine</keyword>
<dbReference type="EMBL" id="AK012609">
    <property type="protein sequence ID" value="BAE43233.1"/>
    <property type="molecule type" value="mRNA"/>
</dbReference>
<dbReference type="EMBL" id="AK142622">
    <property type="protein sequence ID" value="BAE25135.1"/>
    <property type="molecule type" value="mRNA"/>
</dbReference>
<dbReference type="EMBL" id="AK167638">
    <property type="protein sequence ID" value="BAE39689.1"/>
    <property type="molecule type" value="mRNA"/>
</dbReference>
<dbReference type="EMBL" id="AK171972">
    <property type="protein sequence ID" value="BAE42753.1"/>
    <property type="molecule type" value="mRNA"/>
</dbReference>
<dbReference type="EMBL" id="BC056177">
    <property type="protein sequence ID" value="AAH56177.2"/>
    <property type="molecule type" value="mRNA"/>
</dbReference>
<dbReference type="CCDS" id="CCDS16187.1"/>
<dbReference type="RefSeq" id="NP_001028338.1">
    <property type="nucleotide sequence ID" value="NM_001033166.3"/>
</dbReference>
<dbReference type="RefSeq" id="NP_001032356.1">
    <property type="nucleotide sequence ID" value="NM_001037279.2"/>
</dbReference>
<dbReference type="BioGRID" id="215495">
    <property type="interactions" value="2"/>
</dbReference>
<dbReference type="FunCoup" id="Q3UQA7">
    <property type="interactions" value="713"/>
</dbReference>
<dbReference type="STRING" id="10090.ENSMUSP00000099706"/>
<dbReference type="iPTMnet" id="Q3UQA7"/>
<dbReference type="PhosphoSitePlus" id="Q3UQA7"/>
<dbReference type="SwissPalm" id="Q3UQA7"/>
<dbReference type="jPOST" id="Q3UQA7"/>
<dbReference type="PaxDb" id="10090-ENSMUSP00000112635"/>
<dbReference type="PeptideAtlas" id="Q3UQA7"/>
<dbReference type="ProteomicsDB" id="255378"/>
<dbReference type="Pumba" id="Q3UQA7"/>
<dbReference type="Antibodypedia" id="62795">
    <property type="antibodies" value="6 antibodies from 6 providers"/>
</dbReference>
<dbReference type="Ensembl" id="ENSMUST00000102646.4">
    <property type="protein sequence ID" value="ENSMUSP00000099706.3"/>
    <property type="gene ID" value="ENSMUSG00000076437.12"/>
</dbReference>
<dbReference type="Ensembl" id="ENSMUST00000102647.11">
    <property type="protein sequence ID" value="ENSMUSP00000099707.5"/>
    <property type="gene ID" value="ENSMUSG00000076437.12"/>
</dbReference>
<dbReference type="Ensembl" id="ENSMUST00000117299.10">
    <property type="protein sequence ID" value="ENSMUSP00000112635.4"/>
    <property type="gene ID" value="ENSMUSG00000076437.12"/>
</dbReference>
<dbReference type="GeneID" id="72657"/>
<dbReference type="KEGG" id="mmu:72657"/>
<dbReference type="UCSC" id="uc008kiv.1">
    <property type="organism name" value="mouse"/>
</dbReference>
<dbReference type="AGR" id="MGI:1919907"/>
<dbReference type="CTD" id="280636"/>
<dbReference type="MGI" id="MGI:1919907">
    <property type="gene designation" value="Selenoh"/>
</dbReference>
<dbReference type="VEuPathDB" id="HostDB:ENSMUSG00000076437"/>
<dbReference type="eggNOG" id="ENOG502S3QJ">
    <property type="taxonomic scope" value="Eukaryota"/>
</dbReference>
<dbReference type="GeneTree" id="ENSGT00940000163915"/>
<dbReference type="HOGENOM" id="CLU_164858_0_0_1"/>
<dbReference type="InParanoid" id="Q3UQA7"/>
<dbReference type="OMA" id="WHNAEEV"/>
<dbReference type="OrthoDB" id="82357at9989"/>
<dbReference type="PhylomeDB" id="Q3UQA7"/>
<dbReference type="TreeFam" id="TF343373"/>
<dbReference type="BioGRID-ORCS" id="72657">
    <property type="hits" value="2 hits in 76 CRISPR screens"/>
</dbReference>
<dbReference type="PRO" id="PR:Q3UQA7"/>
<dbReference type="Proteomes" id="UP000000589">
    <property type="component" value="Chromosome 2"/>
</dbReference>
<dbReference type="RNAct" id="Q3UQA7">
    <property type="molecule type" value="protein"/>
</dbReference>
<dbReference type="Bgee" id="ENSMUSG00000076437">
    <property type="expression patterns" value="Expressed in 1st arch maxillary component and 254 other cell types or tissues"/>
</dbReference>
<dbReference type="ExpressionAtlas" id="Q3UQA7">
    <property type="expression patterns" value="baseline and differential"/>
</dbReference>
<dbReference type="FunFam" id="3.40.30.10:FF:000269">
    <property type="entry name" value="Selenoprotein H"/>
    <property type="match status" value="1"/>
</dbReference>
<dbReference type="Gene3D" id="3.40.30.10">
    <property type="entry name" value="Glutaredoxin"/>
    <property type="match status" value="1"/>
</dbReference>
<dbReference type="InterPro" id="IPR011893">
    <property type="entry name" value="Selenoprotein_Rdx-typ"/>
</dbReference>
<dbReference type="InterPro" id="IPR052674">
    <property type="entry name" value="SelWTH-like"/>
</dbReference>
<dbReference type="InterPro" id="IPR036249">
    <property type="entry name" value="Thioredoxin-like_sf"/>
</dbReference>
<dbReference type="NCBIfam" id="TIGR02174">
    <property type="entry name" value="CXXU_selWTH"/>
    <property type="match status" value="1"/>
</dbReference>
<dbReference type="PANTHER" id="PTHR33638">
    <property type="entry name" value="SELENOPROTEIN H"/>
    <property type="match status" value="1"/>
</dbReference>
<dbReference type="PANTHER" id="PTHR33638:SF1">
    <property type="entry name" value="SELENOPROTEIN H"/>
    <property type="match status" value="1"/>
</dbReference>
<dbReference type="Pfam" id="PF10262">
    <property type="entry name" value="Rdx"/>
    <property type="match status" value="1"/>
</dbReference>
<dbReference type="SUPFAM" id="SSF52833">
    <property type="entry name" value="Thioredoxin-like"/>
    <property type="match status" value="1"/>
</dbReference>
<comment type="function">
    <text evidence="3">May be involved in a redox-related process.</text>
</comment>
<comment type="similarity">
    <text evidence="3">Belongs to the SelWTH family.</text>
</comment>
<protein>
    <recommendedName>
        <fullName evidence="2">Selenoprotein H</fullName>
        <shortName>SelH</shortName>
    </recommendedName>
</protein>
<proteinExistence type="evidence at protein level"/>